<reference key="1">
    <citation type="journal article" date="1999" name="J. Exp. Zool.">
        <title>Genomic organization of the Hoxa4-Hoxa10 region from Morone saxatilis: implications for Hox gene evolution among vertebrates.</title>
        <authorList>
            <person name="Snell E.A."/>
            <person name="Scemama J.L."/>
            <person name="Stellwag E.J."/>
        </authorList>
    </citation>
    <scope>NUCLEOTIDE SEQUENCE [GENOMIC DNA]</scope>
</reference>
<feature type="chain" id="PRO_0000200055" description="Homeobox protein Hox-A4">
    <location>
        <begin position="1"/>
        <end position="248"/>
    </location>
</feature>
<feature type="DNA-binding region" description="Homeobox" evidence="2">
    <location>
        <begin position="149"/>
        <end position="208"/>
    </location>
</feature>
<feature type="region of interest" description="Disordered" evidence="3">
    <location>
        <begin position="23"/>
        <end position="107"/>
    </location>
</feature>
<feature type="region of interest" description="Disordered" evidence="3">
    <location>
        <begin position="207"/>
        <end position="248"/>
    </location>
</feature>
<feature type="short sequence motif" description="Antp-type hexapeptide">
    <location>
        <begin position="128"/>
        <end position="133"/>
    </location>
</feature>
<feature type="compositionally biased region" description="Basic and acidic residues" evidence="3">
    <location>
        <begin position="35"/>
        <end position="51"/>
    </location>
</feature>
<feature type="compositionally biased region" description="Low complexity" evidence="3">
    <location>
        <begin position="217"/>
        <end position="238"/>
    </location>
</feature>
<sequence length="248" mass="27729">MTMSSYLINSNYIEPSFPPCDEYQQSGYIPNPGDYYERPKDTGFPHHDEPSYPRSNYTESGYDYGNVPATGLDDFGDGHHAQPQPVPQSHGPRLTAAPDGGAGANASKDCSLASEVYPGVAKGKEPVVYPWMKKVHVSTVNASYTGGVPKRSRTAYTRQQALELEKEFHFNRYLTRRRRVEIAHTMCLSERQVKIWFQNRRMKWKKEHKLPNTKIRSSSSASSSASGAQQQQIKTGQQLVPTPCTAGL</sequence>
<comment type="function">
    <text evidence="1">Sequence-specific transcription factor which is part of a developmental regulatory system that provides cells with specific positional identities on the anterior-posterior axis.</text>
</comment>
<comment type="subcellular location">
    <subcellularLocation>
        <location>Nucleus</location>
    </subcellularLocation>
</comment>
<comment type="similarity">
    <text evidence="4">Belongs to the Antp homeobox family. Deformed subfamily.</text>
</comment>
<organism>
    <name type="scientific">Morone saxatilis</name>
    <name type="common">Striped bass</name>
    <name type="synonym">Perca saxatilis</name>
    <dbReference type="NCBI Taxonomy" id="34816"/>
    <lineage>
        <taxon>Eukaryota</taxon>
        <taxon>Metazoa</taxon>
        <taxon>Chordata</taxon>
        <taxon>Craniata</taxon>
        <taxon>Vertebrata</taxon>
        <taxon>Euteleostomi</taxon>
        <taxon>Actinopterygii</taxon>
        <taxon>Neopterygii</taxon>
        <taxon>Teleostei</taxon>
        <taxon>Neoteleostei</taxon>
        <taxon>Acanthomorphata</taxon>
        <taxon>Eupercaria</taxon>
        <taxon>Moronidae</taxon>
        <taxon>Morone</taxon>
    </lineage>
</organism>
<proteinExistence type="inferred from homology"/>
<protein>
    <recommendedName>
        <fullName>Homeobox protein Hox-A4</fullName>
    </recommendedName>
</protein>
<gene>
    <name type="primary">hoxa4</name>
</gene>
<evidence type="ECO:0000250" key="1"/>
<evidence type="ECO:0000255" key="2">
    <source>
        <dbReference type="PROSITE-ProRule" id="PRU00108"/>
    </source>
</evidence>
<evidence type="ECO:0000256" key="3">
    <source>
        <dbReference type="SAM" id="MobiDB-lite"/>
    </source>
</evidence>
<evidence type="ECO:0000305" key="4"/>
<accession>Q9PWD2</accession>
<dbReference type="EMBL" id="AF089743">
    <property type="protein sequence ID" value="AAD46399.1"/>
    <property type="molecule type" value="Genomic_DNA"/>
</dbReference>
<dbReference type="SMR" id="Q9PWD2"/>
<dbReference type="GO" id="GO:0005654">
    <property type="term" value="C:nucleoplasm"/>
    <property type="evidence" value="ECO:0007669"/>
    <property type="project" value="TreeGrafter"/>
</dbReference>
<dbReference type="GO" id="GO:0000981">
    <property type="term" value="F:DNA-binding transcription factor activity, RNA polymerase II-specific"/>
    <property type="evidence" value="ECO:0007669"/>
    <property type="project" value="InterPro"/>
</dbReference>
<dbReference type="GO" id="GO:0000978">
    <property type="term" value="F:RNA polymerase II cis-regulatory region sequence-specific DNA binding"/>
    <property type="evidence" value="ECO:0007669"/>
    <property type="project" value="TreeGrafter"/>
</dbReference>
<dbReference type="GO" id="GO:0009952">
    <property type="term" value="P:anterior/posterior pattern specification"/>
    <property type="evidence" value="ECO:0007669"/>
    <property type="project" value="TreeGrafter"/>
</dbReference>
<dbReference type="GO" id="GO:0048704">
    <property type="term" value="P:embryonic skeletal system morphogenesis"/>
    <property type="evidence" value="ECO:0007669"/>
    <property type="project" value="TreeGrafter"/>
</dbReference>
<dbReference type="GO" id="GO:0045944">
    <property type="term" value="P:positive regulation of transcription by RNA polymerase II"/>
    <property type="evidence" value="ECO:0007669"/>
    <property type="project" value="TreeGrafter"/>
</dbReference>
<dbReference type="CDD" id="cd00086">
    <property type="entry name" value="homeodomain"/>
    <property type="match status" value="1"/>
</dbReference>
<dbReference type="FunFam" id="1.10.10.60:FF:000029">
    <property type="entry name" value="Homeobox protein Hox-D4"/>
    <property type="match status" value="1"/>
</dbReference>
<dbReference type="Gene3D" id="1.10.10.60">
    <property type="entry name" value="Homeodomain-like"/>
    <property type="match status" value="1"/>
</dbReference>
<dbReference type="InterPro" id="IPR050609">
    <property type="entry name" value="Antp_homeobox_Deformed_sf"/>
</dbReference>
<dbReference type="InterPro" id="IPR001356">
    <property type="entry name" value="HD"/>
</dbReference>
<dbReference type="InterPro" id="IPR020479">
    <property type="entry name" value="HD_metazoa"/>
</dbReference>
<dbReference type="InterPro" id="IPR017995">
    <property type="entry name" value="Homeobox_antennapedia"/>
</dbReference>
<dbReference type="InterPro" id="IPR001827">
    <property type="entry name" value="Homeobox_Antennapedia_CS"/>
</dbReference>
<dbReference type="InterPro" id="IPR017970">
    <property type="entry name" value="Homeobox_CS"/>
</dbReference>
<dbReference type="InterPro" id="IPR009057">
    <property type="entry name" value="Homeodomain-like_sf"/>
</dbReference>
<dbReference type="PANTHER" id="PTHR45771:SF2">
    <property type="entry name" value="HOMEOBOX PROTEIN HOX-A4"/>
    <property type="match status" value="1"/>
</dbReference>
<dbReference type="PANTHER" id="PTHR45771">
    <property type="entry name" value="HOMEOTIC PROTEIN DEFORMED"/>
    <property type="match status" value="1"/>
</dbReference>
<dbReference type="Pfam" id="PF00046">
    <property type="entry name" value="Homeodomain"/>
    <property type="match status" value="1"/>
</dbReference>
<dbReference type="PRINTS" id="PR00025">
    <property type="entry name" value="ANTENNAPEDIA"/>
</dbReference>
<dbReference type="PRINTS" id="PR00024">
    <property type="entry name" value="HOMEOBOX"/>
</dbReference>
<dbReference type="SMART" id="SM00389">
    <property type="entry name" value="HOX"/>
    <property type="match status" value="1"/>
</dbReference>
<dbReference type="SUPFAM" id="SSF46689">
    <property type="entry name" value="Homeodomain-like"/>
    <property type="match status" value="1"/>
</dbReference>
<dbReference type="PROSITE" id="PS00032">
    <property type="entry name" value="ANTENNAPEDIA"/>
    <property type="match status" value="1"/>
</dbReference>
<dbReference type="PROSITE" id="PS00027">
    <property type="entry name" value="HOMEOBOX_1"/>
    <property type="match status" value="1"/>
</dbReference>
<dbReference type="PROSITE" id="PS50071">
    <property type="entry name" value="HOMEOBOX_2"/>
    <property type="match status" value="1"/>
</dbReference>
<name>HXA4_MORSA</name>
<keyword id="KW-0217">Developmental protein</keyword>
<keyword id="KW-0238">DNA-binding</keyword>
<keyword id="KW-0371">Homeobox</keyword>
<keyword id="KW-0539">Nucleus</keyword>
<keyword id="KW-0804">Transcription</keyword>
<keyword id="KW-0805">Transcription regulation</keyword>